<keyword id="KW-0378">Hydrolase</keyword>
<keyword id="KW-0408">Iron</keyword>
<keyword id="KW-0479">Metal-binding</keyword>
<keyword id="KW-0648">Protein biosynthesis</keyword>
<keyword id="KW-1185">Reference proteome</keyword>
<name>DEF_CALS4</name>
<feature type="chain" id="PRO_0000082868" description="Peptide deformylase">
    <location>
        <begin position="1"/>
        <end position="159"/>
    </location>
</feature>
<feature type="active site" evidence="1">
    <location>
        <position position="131"/>
    </location>
</feature>
<feature type="binding site" evidence="1">
    <location>
        <position position="88"/>
    </location>
    <ligand>
        <name>Fe cation</name>
        <dbReference type="ChEBI" id="CHEBI:24875"/>
    </ligand>
</feature>
<feature type="binding site" evidence="1">
    <location>
        <position position="130"/>
    </location>
    <ligand>
        <name>Fe cation</name>
        <dbReference type="ChEBI" id="CHEBI:24875"/>
    </ligand>
</feature>
<feature type="binding site" evidence="1">
    <location>
        <position position="134"/>
    </location>
    <ligand>
        <name>Fe cation</name>
        <dbReference type="ChEBI" id="CHEBI:24875"/>
    </ligand>
</feature>
<gene>
    <name evidence="1" type="primary">def</name>
    <name type="ordered locus">TTE1507</name>
</gene>
<dbReference type="EC" id="3.5.1.88" evidence="1"/>
<dbReference type="EMBL" id="AE008691">
    <property type="protein sequence ID" value="AAM24725.1"/>
    <property type="molecule type" value="Genomic_DNA"/>
</dbReference>
<dbReference type="RefSeq" id="WP_011025764.1">
    <property type="nucleotide sequence ID" value="NZ_JANUCV010000001.1"/>
</dbReference>
<dbReference type="SMR" id="Q8R9T0"/>
<dbReference type="STRING" id="273068.TTE1507"/>
<dbReference type="KEGG" id="tte:TTE1507"/>
<dbReference type="eggNOG" id="COG0242">
    <property type="taxonomic scope" value="Bacteria"/>
</dbReference>
<dbReference type="HOGENOM" id="CLU_061901_4_2_9"/>
<dbReference type="OrthoDB" id="9784988at2"/>
<dbReference type="Proteomes" id="UP000000555">
    <property type="component" value="Chromosome"/>
</dbReference>
<dbReference type="GO" id="GO:0046872">
    <property type="term" value="F:metal ion binding"/>
    <property type="evidence" value="ECO:0007669"/>
    <property type="project" value="UniProtKB-KW"/>
</dbReference>
<dbReference type="GO" id="GO:0042586">
    <property type="term" value="F:peptide deformylase activity"/>
    <property type="evidence" value="ECO:0007669"/>
    <property type="project" value="UniProtKB-UniRule"/>
</dbReference>
<dbReference type="GO" id="GO:0043686">
    <property type="term" value="P:co-translational protein modification"/>
    <property type="evidence" value="ECO:0007669"/>
    <property type="project" value="TreeGrafter"/>
</dbReference>
<dbReference type="GO" id="GO:0006412">
    <property type="term" value="P:translation"/>
    <property type="evidence" value="ECO:0007669"/>
    <property type="project" value="UniProtKB-UniRule"/>
</dbReference>
<dbReference type="CDD" id="cd00487">
    <property type="entry name" value="Pep_deformylase"/>
    <property type="match status" value="1"/>
</dbReference>
<dbReference type="Gene3D" id="3.90.45.10">
    <property type="entry name" value="Peptide deformylase"/>
    <property type="match status" value="1"/>
</dbReference>
<dbReference type="HAMAP" id="MF_00163">
    <property type="entry name" value="Pep_deformylase"/>
    <property type="match status" value="1"/>
</dbReference>
<dbReference type="InterPro" id="IPR023635">
    <property type="entry name" value="Peptide_deformylase"/>
</dbReference>
<dbReference type="InterPro" id="IPR036821">
    <property type="entry name" value="Peptide_deformylase_sf"/>
</dbReference>
<dbReference type="NCBIfam" id="TIGR00079">
    <property type="entry name" value="pept_deformyl"/>
    <property type="match status" value="1"/>
</dbReference>
<dbReference type="NCBIfam" id="NF001159">
    <property type="entry name" value="PRK00150.1-3"/>
    <property type="match status" value="1"/>
</dbReference>
<dbReference type="PANTHER" id="PTHR10458">
    <property type="entry name" value="PEPTIDE DEFORMYLASE"/>
    <property type="match status" value="1"/>
</dbReference>
<dbReference type="PANTHER" id="PTHR10458:SF22">
    <property type="entry name" value="PEPTIDE DEFORMYLASE"/>
    <property type="match status" value="1"/>
</dbReference>
<dbReference type="Pfam" id="PF01327">
    <property type="entry name" value="Pep_deformylase"/>
    <property type="match status" value="1"/>
</dbReference>
<dbReference type="PIRSF" id="PIRSF004749">
    <property type="entry name" value="Pep_def"/>
    <property type="match status" value="1"/>
</dbReference>
<dbReference type="PRINTS" id="PR01576">
    <property type="entry name" value="PDEFORMYLASE"/>
</dbReference>
<dbReference type="SUPFAM" id="SSF56420">
    <property type="entry name" value="Peptide deformylase"/>
    <property type="match status" value="1"/>
</dbReference>
<organism>
    <name type="scientific">Caldanaerobacter subterraneus subsp. tengcongensis (strain DSM 15242 / JCM 11007 / NBRC 100824 / MB4)</name>
    <name type="common">Thermoanaerobacter tengcongensis</name>
    <dbReference type="NCBI Taxonomy" id="273068"/>
    <lineage>
        <taxon>Bacteria</taxon>
        <taxon>Bacillati</taxon>
        <taxon>Bacillota</taxon>
        <taxon>Clostridia</taxon>
        <taxon>Thermoanaerobacterales</taxon>
        <taxon>Thermoanaerobacteraceae</taxon>
        <taxon>Caldanaerobacter</taxon>
    </lineage>
</organism>
<comment type="function">
    <text evidence="1">Removes the formyl group from the N-terminal Met of newly synthesized proteins. Requires at least a dipeptide for an efficient rate of reaction. N-terminal L-methionine is a prerequisite for activity but the enzyme has broad specificity at other positions.</text>
</comment>
<comment type="catalytic activity">
    <reaction evidence="1">
        <text>N-terminal N-formyl-L-methionyl-[peptide] + H2O = N-terminal L-methionyl-[peptide] + formate</text>
        <dbReference type="Rhea" id="RHEA:24420"/>
        <dbReference type="Rhea" id="RHEA-COMP:10639"/>
        <dbReference type="Rhea" id="RHEA-COMP:10640"/>
        <dbReference type="ChEBI" id="CHEBI:15377"/>
        <dbReference type="ChEBI" id="CHEBI:15740"/>
        <dbReference type="ChEBI" id="CHEBI:49298"/>
        <dbReference type="ChEBI" id="CHEBI:64731"/>
        <dbReference type="EC" id="3.5.1.88"/>
    </reaction>
</comment>
<comment type="cofactor">
    <cofactor evidence="1">
        <name>Fe(2+)</name>
        <dbReference type="ChEBI" id="CHEBI:29033"/>
    </cofactor>
    <text evidence="1">Binds 1 Fe(2+) ion.</text>
</comment>
<comment type="similarity">
    <text evidence="1">Belongs to the polypeptide deformylase family.</text>
</comment>
<proteinExistence type="inferred from homology"/>
<protein>
    <recommendedName>
        <fullName evidence="1">Peptide deformylase</fullName>
        <shortName evidence="1">PDF</shortName>
        <ecNumber evidence="1">3.5.1.88</ecNumber>
    </recommendedName>
    <alternativeName>
        <fullName evidence="1">Polypeptide deformylase</fullName>
    </alternativeName>
</protein>
<reference key="1">
    <citation type="journal article" date="2002" name="Genome Res.">
        <title>A complete sequence of the T. tengcongensis genome.</title>
        <authorList>
            <person name="Bao Q."/>
            <person name="Tian Y."/>
            <person name="Li W."/>
            <person name="Xu Z."/>
            <person name="Xuan Z."/>
            <person name="Hu S."/>
            <person name="Dong W."/>
            <person name="Yang J."/>
            <person name="Chen Y."/>
            <person name="Xue Y."/>
            <person name="Xu Y."/>
            <person name="Lai X."/>
            <person name="Huang L."/>
            <person name="Dong X."/>
            <person name="Ma Y."/>
            <person name="Ling L."/>
            <person name="Tan H."/>
            <person name="Chen R."/>
            <person name="Wang J."/>
            <person name="Yu J."/>
            <person name="Yang H."/>
        </authorList>
    </citation>
    <scope>NUCLEOTIDE SEQUENCE [LARGE SCALE GENOMIC DNA]</scope>
    <source>
        <strain>DSM 15242 / JCM 11007 / NBRC 100824 / MB4</strain>
    </source>
</reference>
<accession>Q8R9T0</accession>
<evidence type="ECO:0000255" key="1">
    <source>
        <dbReference type="HAMAP-Rule" id="MF_00163"/>
    </source>
</evidence>
<sequence length="159" mass="17813">MAIRYIRKIGDPVLRKKAKPVTEINSHIITILEDMAETMYLNDGVGLAANQVGILRRLVVIDVGEGLLELINPEIVYEEGEQIGPEGCLSIPGVFGEVKRPQKVKVRYLDREGNVKEIVGEDLLARALCHEIDHLEGVLFVDKVIRFLDKEELEGVKEV</sequence>